<feature type="chain" id="PRO_0000252517" description="Large ribosomal subunit protein bL19">
    <location>
        <begin position="1"/>
        <end position="148"/>
    </location>
</feature>
<proteinExistence type="inferred from homology"/>
<sequence>MVNIIEQLEKEQIEKLTADRGVPSFAPGDTLKVNVKVIEGNRERVQAYEGVCIARKNDGLNSSFVVRKISYGEGVERIFPLYSPNIASIEVVRRGDVRRAKLYYLRDRRGKSARIAEQTTGHSGKVAAAERADAAAVKAAKVAAAKVE</sequence>
<organism>
    <name type="scientific">Paramagnetospirillum magneticum (strain ATCC 700264 / AMB-1)</name>
    <name type="common">Magnetospirillum magneticum</name>
    <dbReference type="NCBI Taxonomy" id="342108"/>
    <lineage>
        <taxon>Bacteria</taxon>
        <taxon>Pseudomonadati</taxon>
        <taxon>Pseudomonadota</taxon>
        <taxon>Alphaproteobacteria</taxon>
        <taxon>Rhodospirillales</taxon>
        <taxon>Magnetospirillaceae</taxon>
        <taxon>Paramagnetospirillum</taxon>
    </lineage>
</organism>
<evidence type="ECO:0000255" key="1">
    <source>
        <dbReference type="HAMAP-Rule" id="MF_00402"/>
    </source>
</evidence>
<evidence type="ECO:0000305" key="2"/>
<comment type="function">
    <text evidence="1">This protein is located at the 30S-50S ribosomal subunit interface and may play a role in the structure and function of the aminoacyl-tRNA binding site.</text>
</comment>
<comment type="similarity">
    <text evidence="1">Belongs to the bacterial ribosomal protein bL19 family.</text>
</comment>
<reference key="1">
    <citation type="journal article" date="2005" name="DNA Res.">
        <title>Complete genome sequence of the facultative anaerobic magnetotactic bacterium Magnetospirillum sp. strain AMB-1.</title>
        <authorList>
            <person name="Matsunaga T."/>
            <person name="Okamura Y."/>
            <person name="Fukuda Y."/>
            <person name="Wahyudi A.T."/>
            <person name="Murase Y."/>
            <person name="Takeyama H."/>
        </authorList>
    </citation>
    <scope>NUCLEOTIDE SEQUENCE [LARGE SCALE GENOMIC DNA]</scope>
    <source>
        <strain>ATCC 700264 / AMB-1</strain>
    </source>
</reference>
<keyword id="KW-0687">Ribonucleoprotein</keyword>
<keyword id="KW-0689">Ribosomal protein</keyword>
<accession>Q2VZV5</accession>
<dbReference type="EMBL" id="AP007255">
    <property type="protein sequence ID" value="BAE52870.1"/>
    <property type="molecule type" value="Genomic_DNA"/>
</dbReference>
<dbReference type="RefSeq" id="WP_011386417.1">
    <property type="nucleotide sequence ID" value="NC_007626.1"/>
</dbReference>
<dbReference type="SMR" id="Q2VZV5"/>
<dbReference type="STRING" id="342108.amb4066"/>
<dbReference type="KEGG" id="mag:amb4066"/>
<dbReference type="HOGENOM" id="CLU_103507_0_2_5"/>
<dbReference type="OrthoDB" id="9803541at2"/>
<dbReference type="Proteomes" id="UP000007058">
    <property type="component" value="Chromosome"/>
</dbReference>
<dbReference type="GO" id="GO:0022625">
    <property type="term" value="C:cytosolic large ribosomal subunit"/>
    <property type="evidence" value="ECO:0007669"/>
    <property type="project" value="TreeGrafter"/>
</dbReference>
<dbReference type="GO" id="GO:0003735">
    <property type="term" value="F:structural constituent of ribosome"/>
    <property type="evidence" value="ECO:0007669"/>
    <property type="project" value="InterPro"/>
</dbReference>
<dbReference type="GO" id="GO:0006412">
    <property type="term" value="P:translation"/>
    <property type="evidence" value="ECO:0007669"/>
    <property type="project" value="UniProtKB-UniRule"/>
</dbReference>
<dbReference type="FunFam" id="2.30.30.790:FF:000001">
    <property type="entry name" value="50S ribosomal protein L19"/>
    <property type="match status" value="1"/>
</dbReference>
<dbReference type="Gene3D" id="2.30.30.790">
    <property type="match status" value="1"/>
</dbReference>
<dbReference type="HAMAP" id="MF_00402">
    <property type="entry name" value="Ribosomal_bL19"/>
    <property type="match status" value="1"/>
</dbReference>
<dbReference type="InterPro" id="IPR001857">
    <property type="entry name" value="Ribosomal_bL19"/>
</dbReference>
<dbReference type="InterPro" id="IPR018257">
    <property type="entry name" value="Ribosomal_bL19_CS"/>
</dbReference>
<dbReference type="InterPro" id="IPR038657">
    <property type="entry name" value="Ribosomal_bL19_sf"/>
</dbReference>
<dbReference type="InterPro" id="IPR008991">
    <property type="entry name" value="Translation_prot_SH3-like_sf"/>
</dbReference>
<dbReference type="NCBIfam" id="TIGR01024">
    <property type="entry name" value="rplS_bact"/>
    <property type="match status" value="1"/>
</dbReference>
<dbReference type="PANTHER" id="PTHR15680:SF9">
    <property type="entry name" value="LARGE RIBOSOMAL SUBUNIT PROTEIN BL19M"/>
    <property type="match status" value="1"/>
</dbReference>
<dbReference type="PANTHER" id="PTHR15680">
    <property type="entry name" value="RIBOSOMAL PROTEIN L19"/>
    <property type="match status" value="1"/>
</dbReference>
<dbReference type="Pfam" id="PF01245">
    <property type="entry name" value="Ribosomal_L19"/>
    <property type="match status" value="1"/>
</dbReference>
<dbReference type="PIRSF" id="PIRSF002191">
    <property type="entry name" value="Ribosomal_L19"/>
    <property type="match status" value="1"/>
</dbReference>
<dbReference type="PRINTS" id="PR00061">
    <property type="entry name" value="RIBOSOMALL19"/>
</dbReference>
<dbReference type="SUPFAM" id="SSF50104">
    <property type="entry name" value="Translation proteins SH3-like domain"/>
    <property type="match status" value="1"/>
</dbReference>
<dbReference type="PROSITE" id="PS01015">
    <property type="entry name" value="RIBOSOMAL_L19"/>
    <property type="match status" value="1"/>
</dbReference>
<name>RL19_PARM1</name>
<protein>
    <recommendedName>
        <fullName evidence="1">Large ribosomal subunit protein bL19</fullName>
    </recommendedName>
    <alternativeName>
        <fullName evidence="2">50S ribosomal protein L19</fullName>
    </alternativeName>
</protein>
<gene>
    <name evidence="1" type="primary">rplS</name>
    <name type="ordered locus">amb4066</name>
</gene>